<organism>
    <name type="scientific">Listeria monocytogenes serotype 4a (strain HCC23)</name>
    <dbReference type="NCBI Taxonomy" id="552536"/>
    <lineage>
        <taxon>Bacteria</taxon>
        <taxon>Bacillati</taxon>
        <taxon>Bacillota</taxon>
        <taxon>Bacilli</taxon>
        <taxon>Bacillales</taxon>
        <taxon>Listeriaceae</taxon>
        <taxon>Listeria</taxon>
    </lineage>
</organism>
<gene>
    <name evidence="1" type="primary">dtd</name>
    <name type="ordered locus">LMHCC_1047</name>
</gene>
<feature type="chain" id="PRO_1000146202" description="D-aminoacyl-tRNA deacylase">
    <location>
        <begin position="1"/>
        <end position="151"/>
    </location>
</feature>
<feature type="short sequence motif" description="Gly-cisPro motif, important for rejection of L-amino acids" evidence="1">
    <location>
        <begin position="137"/>
        <end position="138"/>
    </location>
</feature>
<reference key="1">
    <citation type="journal article" date="2011" name="J. Bacteriol.">
        <title>Genome sequence of lineage III Listeria monocytogenes strain HCC23.</title>
        <authorList>
            <person name="Steele C.L."/>
            <person name="Donaldson J.R."/>
            <person name="Paul D."/>
            <person name="Banes M.M."/>
            <person name="Arick T."/>
            <person name="Bridges S.M."/>
            <person name="Lawrence M.L."/>
        </authorList>
    </citation>
    <scope>NUCLEOTIDE SEQUENCE [LARGE SCALE GENOMIC DNA]</scope>
    <source>
        <strain>HCC23</strain>
    </source>
</reference>
<proteinExistence type="inferred from homology"/>
<comment type="function">
    <text evidence="1">An aminoacyl-tRNA editing enzyme that deacylates mischarged D-aminoacyl-tRNAs. Also deacylates mischarged glycyl-tRNA(Ala), protecting cells against glycine mischarging by AlaRS. Acts via tRNA-based rather than protein-based catalysis; rejects L-amino acids rather than detecting D-amino acids in the active site. By recycling D-aminoacyl-tRNA to D-amino acids and free tRNA molecules, this enzyme counteracts the toxicity associated with the formation of D-aminoacyl-tRNA entities in vivo and helps enforce protein L-homochirality.</text>
</comment>
<comment type="catalytic activity">
    <reaction evidence="1">
        <text>glycyl-tRNA(Ala) + H2O = tRNA(Ala) + glycine + H(+)</text>
        <dbReference type="Rhea" id="RHEA:53744"/>
        <dbReference type="Rhea" id="RHEA-COMP:9657"/>
        <dbReference type="Rhea" id="RHEA-COMP:13640"/>
        <dbReference type="ChEBI" id="CHEBI:15377"/>
        <dbReference type="ChEBI" id="CHEBI:15378"/>
        <dbReference type="ChEBI" id="CHEBI:57305"/>
        <dbReference type="ChEBI" id="CHEBI:78442"/>
        <dbReference type="ChEBI" id="CHEBI:78522"/>
        <dbReference type="EC" id="3.1.1.96"/>
    </reaction>
</comment>
<comment type="catalytic activity">
    <reaction evidence="1">
        <text>a D-aminoacyl-tRNA + H2O = a tRNA + a D-alpha-amino acid + H(+)</text>
        <dbReference type="Rhea" id="RHEA:13953"/>
        <dbReference type="Rhea" id="RHEA-COMP:10123"/>
        <dbReference type="Rhea" id="RHEA-COMP:10124"/>
        <dbReference type="ChEBI" id="CHEBI:15377"/>
        <dbReference type="ChEBI" id="CHEBI:15378"/>
        <dbReference type="ChEBI" id="CHEBI:59871"/>
        <dbReference type="ChEBI" id="CHEBI:78442"/>
        <dbReference type="ChEBI" id="CHEBI:79333"/>
        <dbReference type="EC" id="3.1.1.96"/>
    </reaction>
</comment>
<comment type="subunit">
    <text evidence="1">Homodimer.</text>
</comment>
<comment type="subcellular location">
    <subcellularLocation>
        <location evidence="1">Cytoplasm</location>
    </subcellularLocation>
</comment>
<comment type="domain">
    <text evidence="1">A Gly-cisPro motif from one monomer fits into the active site of the other monomer to allow specific chiral rejection of L-amino acids.</text>
</comment>
<comment type="similarity">
    <text evidence="1">Belongs to the DTD family.</text>
</comment>
<sequence>MRVLLQRCYEASVSVEEEVISEIAGGLCLLVGFTHTDTPETVDYMAKKIVGLRIFEDESEKMNISLADRGGAILSVSQFTLYADVSKGKRPSFTKSAPGEKAEALYDLFNQKLADSGIIVETGVFGAMMDVKIVNHGPITIMLDSDEMRSK</sequence>
<evidence type="ECO:0000255" key="1">
    <source>
        <dbReference type="HAMAP-Rule" id="MF_00518"/>
    </source>
</evidence>
<accession>B8DHM6</accession>
<protein>
    <recommendedName>
        <fullName evidence="1">D-aminoacyl-tRNA deacylase</fullName>
        <shortName evidence="1">DTD</shortName>
        <ecNumber evidence="1">3.1.1.96</ecNumber>
    </recommendedName>
    <alternativeName>
        <fullName evidence="1">Gly-tRNA(Ala) deacylase</fullName>
    </alternativeName>
</protein>
<dbReference type="EC" id="3.1.1.96" evidence="1"/>
<dbReference type="EMBL" id="CP001175">
    <property type="protein sequence ID" value="ACK39395.1"/>
    <property type="molecule type" value="Genomic_DNA"/>
</dbReference>
<dbReference type="RefSeq" id="WP_012581282.1">
    <property type="nucleotide sequence ID" value="NC_011660.1"/>
</dbReference>
<dbReference type="SMR" id="B8DHM6"/>
<dbReference type="KEGG" id="lmh:LMHCC_1047"/>
<dbReference type="HOGENOM" id="CLU_076901_1_0_9"/>
<dbReference type="GO" id="GO:0005737">
    <property type="term" value="C:cytoplasm"/>
    <property type="evidence" value="ECO:0007669"/>
    <property type="project" value="UniProtKB-SubCell"/>
</dbReference>
<dbReference type="GO" id="GO:0051500">
    <property type="term" value="F:D-tyrosyl-tRNA(Tyr) deacylase activity"/>
    <property type="evidence" value="ECO:0007669"/>
    <property type="project" value="TreeGrafter"/>
</dbReference>
<dbReference type="GO" id="GO:0106026">
    <property type="term" value="F:Gly-tRNA(Ala) deacylase activity"/>
    <property type="evidence" value="ECO:0007669"/>
    <property type="project" value="UniProtKB-UniRule"/>
</dbReference>
<dbReference type="GO" id="GO:0043908">
    <property type="term" value="F:Ser(Gly)-tRNA(Ala) hydrolase activity"/>
    <property type="evidence" value="ECO:0007669"/>
    <property type="project" value="UniProtKB-UniRule"/>
</dbReference>
<dbReference type="GO" id="GO:0000049">
    <property type="term" value="F:tRNA binding"/>
    <property type="evidence" value="ECO:0007669"/>
    <property type="project" value="UniProtKB-UniRule"/>
</dbReference>
<dbReference type="GO" id="GO:0019478">
    <property type="term" value="P:D-amino acid catabolic process"/>
    <property type="evidence" value="ECO:0007669"/>
    <property type="project" value="UniProtKB-UniRule"/>
</dbReference>
<dbReference type="CDD" id="cd00563">
    <property type="entry name" value="Dtyr_deacylase"/>
    <property type="match status" value="1"/>
</dbReference>
<dbReference type="FunFam" id="3.50.80.10:FF:000007">
    <property type="entry name" value="D-aminoacyl-tRNA deacylase"/>
    <property type="match status" value="1"/>
</dbReference>
<dbReference type="Gene3D" id="3.50.80.10">
    <property type="entry name" value="D-tyrosyl-tRNA(Tyr) deacylase"/>
    <property type="match status" value="1"/>
</dbReference>
<dbReference type="HAMAP" id="MF_00518">
    <property type="entry name" value="Deacylase_Dtd"/>
    <property type="match status" value="1"/>
</dbReference>
<dbReference type="InterPro" id="IPR003732">
    <property type="entry name" value="Daa-tRNA_deacyls_DTD"/>
</dbReference>
<dbReference type="InterPro" id="IPR023509">
    <property type="entry name" value="DTD-like_sf"/>
</dbReference>
<dbReference type="NCBIfam" id="TIGR00256">
    <property type="entry name" value="D-aminoacyl-tRNA deacylase"/>
    <property type="match status" value="1"/>
</dbReference>
<dbReference type="PANTHER" id="PTHR10472:SF5">
    <property type="entry name" value="D-AMINOACYL-TRNA DEACYLASE 1"/>
    <property type="match status" value="1"/>
</dbReference>
<dbReference type="PANTHER" id="PTHR10472">
    <property type="entry name" value="D-TYROSYL-TRNA TYR DEACYLASE"/>
    <property type="match status" value="1"/>
</dbReference>
<dbReference type="Pfam" id="PF02580">
    <property type="entry name" value="Tyr_Deacylase"/>
    <property type="match status" value="1"/>
</dbReference>
<dbReference type="SUPFAM" id="SSF69500">
    <property type="entry name" value="DTD-like"/>
    <property type="match status" value="1"/>
</dbReference>
<name>DTD_LISMH</name>
<keyword id="KW-0963">Cytoplasm</keyword>
<keyword id="KW-0378">Hydrolase</keyword>
<keyword id="KW-0694">RNA-binding</keyword>
<keyword id="KW-0820">tRNA-binding</keyword>